<sequence length="150" mass="16543">MGQYKIWVDADACPNPIKEILFRAAERKSLPLVLVANQMLRVPPSPYISQVRVGSGFDVADQYIVDHVEATHLVITADIPLAAQVIEKGALALNPRGELYTTDNIRQKLTMRDFMEDLRSSGVHTGGPDALSAADKQAFANSLDKWLVRV</sequence>
<protein>
    <recommendedName>
        <fullName evidence="1">UPF0178 protein Shewmr4_1560</fullName>
    </recommendedName>
</protein>
<organism>
    <name type="scientific">Shewanella sp. (strain MR-4)</name>
    <dbReference type="NCBI Taxonomy" id="60480"/>
    <lineage>
        <taxon>Bacteria</taxon>
        <taxon>Pseudomonadati</taxon>
        <taxon>Pseudomonadota</taxon>
        <taxon>Gammaproteobacteria</taxon>
        <taxon>Alteromonadales</taxon>
        <taxon>Shewanellaceae</taxon>
        <taxon>Shewanella</taxon>
    </lineage>
</organism>
<reference key="1">
    <citation type="submission" date="2006-08" db="EMBL/GenBank/DDBJ databases">
        <title>Complete sequence of Shewanella sp. MR-4.</title>
        <authorList>
            <consortium name="US DOE Joint Genome Institute"/>
            <person name="Copeland A."/>
            <person name="Lucas S."/>
            <person name="Lapidus A."/>
            <person name="Barry K."/>
            <person name="Detter J.C."/>
            <person name="Glavina del Rio T."/>
            <person name="Hammon N."/>
            <person name="Israni S."/>
            <person name="Dalin E."/>
            <person name="Tice H."/>
            <person name="Pitluck S."/>
            <person name="Kiss H."/>
            <person name="Brettin T."/>
            <person name="Bruce D."/>
            <person name="Han C."/>
            <person name="Tapia R."/>
            <person name="Gilna P."/>
            <person name="Schmutz J."/>
            <person name="Larimer F."/>
            <person name="Land M."/>
            <person name="Hauser L."/>
            <person name="Kyrpides N."/>
            <person name="Mikhailova N."/>
            <person name="Nealson K."/>
            <person name="Konstantinidis K."/>
            <person name="Klappenbach J."/>
            <person name="Tiedje J."/>
            <person name="Richardson P."/>
        </authorList>
    </citation>
    <scope>NUCLEOTIDE SEQUENCE [LARGE SCALE GENOMIC DNA]</scope>
    <source>
        <strain>MR-4</strain>
    </source>
</reference>
<gene>
    <name type="ordered locus">Shewmr4_1560</name>
</gene>
<proteinExistence type="inferred from homology"/>
<evidence type="ECO:0000255" key="1">
    <source>
        <dbReference type="HAMAP-Rule" id="MF_00489"/>
    </source>
</evidence>
<name>Y1560_SHESM</name>
<accession>Q0HJX9</accession>
<comment type="similarity">
    <text evidence="1">Belongs to the UPF0178 family.</text>
</comment>
<feature type="chain" id="PRO_1000014446" description="UPF0178 protein Shewmr4_1560">
    <location>
        <begin position="1"/>
        <end position="150"/>
    </location>
</feature>
<dbReference type="EMBL" id="CP000446">
    <property type="protein sequence ID" value="ABI38638.1"/>
    <property type="molecule type" value="Genomic_DNA"/>
</dbReference>
<dbReference type="RefSeq" id="WP_011622341.1">
    <property type="nucleotide sequence ID" value="NC_008321.1"/>
</dbReference>
<dbReference type="SMR" id="Q0HJX9"/>
<dbReference type="KEGG" id="she:Shewmr4_1560"/>
<dbReference type="HOGENOM" id="CLU_106619_1_0_6"/>
<dbReference type="CDD" id="cd18720">
    <property type="entry name" value="PIN_YqxD-like"/>
    <property type="match status" value="1"/>
</dbReference>
<dbReference type="HAMAP" id="MF_00489">
    <property type="entry name" value="UPF0178"/>
    <property type="match status" value="1"/>
</dbReference>
<dbReference type="InterPro" id="IPR003791">
    <property type="entry name" value="UPF0178"/>
</dbReference>
<dbReference type="NCBIfam" id="NF001095">
    <property type="entry name" value="PRK00124.1"/>
    <property type="match status" value="1"/>
</dbReference>
<dbReference type="PANTHER" id="PTHR35146">
    <property type="entry name" value="UPF0178 PROTEIN YAII"/>
    <property type="match status" value="1"/>
</dbReference>
<dbReference type="PANTHER" id="PTHR35146:SF1">
    <property type="entry name" value="UPF0178 PROTEIN YAII"/>
    <property type="match status" value="1"/>
</dbReference>
<dbReference type="Pfam" id="PF02639">
    <property type="entry name" value="DUF188"/>
    <property type="match status" value="1"/>
</dbReference>